<comment type="function">
    <text evidence="1">Member of a network of 50S ribosomal subunit biogenesis factors which assembles along the 30S-50S interface, preventing incorrect 23S rRNA structures from forming. Promotes peptidyl transferase center (PTC) maturation.</text>
</comment>
<comment type="subcellular location">
    <subcellularLocation>
        <location evidence="1">Cytoplasm</location>
    </subcellularLocation>
    <text evidence="1">Associates with late stage pre-50S ribosomal subunits.</text>
</comment>
<comment type="similarity">
    <text evidence="1">Belongs to the DarP family.</text>
</comment>
<sequence>MTKQPEDWLDDVPGDDVEDEDDEIIWVSKSEIKRDAEELKRLGAELVDLGKNALDKIPLDTDLRDAIELAQRIKKEGRRRQLQLIGKMLRNRDVDPIRQALDKLKNRHNQQVALFHKLEQIRDRLIDDGDDAVAEVLNLWPDADRQQLRSLIRNAKKEKEGNKPPKSARLIFQYLRELAENEG</sequence>
<protein>
    <recommendedName>
        <fullName evidence="1">Dual-action ribosomal maturation protein DarP</fullName>
    </recommendedName>
    <alternativeName>
        <fullName evidence="1">Large ribosomal subunit assembly factor DarP</fullName>
    </alternativeName>
</protein>
<proteinExistence type="inferred from homology"/>
<gene>
    <name evidence="1" type="primary">darP</name>
    <name type="ordered locus">KPK_5034</name>
</gene>
<name>DARP_KLEP3</name>
<keyword id="KW-0963">Cytoplasm</keyword>
<keyword id="KW-0690">Ribosome biogenesis</keyword>
<keyword id="KW-0694">RNA-binding</keyword>
<keyword id="KW-0699">rRNA-binding</keyword>
<organism>
    <name type="scientific">Klebsiella pneumoniae (strain 342)</name>
    <dbReference type="NCBI Taxonomy" id="507522"/>
    <lineage>
        <taxon>Bacteria</taxon>
        <taxon>Pseudomonadati</taxon>
        <taxon>Pseudomonadota</taxon>
        <taxon>Gammaproteobacteria</taxon>
        <taxon>Enterobacterales</taxon>
        <taxon>Enterobacteriaceae</taxon>
        <taxon>Klebsiella/Raoultella group</taxon>
        <taxon>Klebsiella</taxon>
        <taxon>Klebsiella pneumoniae complex</taxon>
    </lineage>
</organism>
<evidence type="ECO:0000255" key="1">
    <source>
        <dbReference type="HAMAP-Rule" id="MF_00765"/>
    </source>
</evidence>
<accession>B5Y2W8</accession>
<dbReference type="EMBL" id="CP000964">
    <property type="protein sequence ID" value="ACI11382.1"/>
    <property type="molecule type" value="Genomic_DNA"/>
</dbReference>
<dbReference type="SMR" id="B5Y2W8"/>
<dbReference type="KEGG" id="kpe:KPK_5034"/>
<dbReference type="HOGENOM" id="CLU_106757_2_0_6"/>
<dbReference type="BioCyc" id="KPNE507522:GI0B-5007-MONOMER"/>
<dbReference type="Proteomes" id="UP000001734">
    <property type="component" value="Chromosome"/>
</dbReference>
<dbReference type="GO" id="GO:0005829">
    <property type="term" value="C:cytosol"/>
    <property type="evidence" value="ECO:0007669"/>
    <property type="project" value="TreeGrafter"/>
</dbReference>
<dbReference type="GO" id="GO:0043022">
    <property type="term" value="F:ribosome binding"/>
    <property type="evidence" value="ECO:0007669"/>
    <property type="project" value="UniProtKB-UniRule"/>
</dbReference>
<dbReference type="GO" id="GO:0019843">
    <property type="term" value="F:rRNA binding"/>
    <property type="evidence" value="ECO:0007669"/>
    <property type="project" value="UniProtKB-UniRule"/>
</dbReference>
<dbReference type="GO" id="GO:1902626">
    <property type="term" value="P:assembly of large subunit precursor of preribosome"/>
    <property type="evidence" value="ECO:0007669"/>
    <property type="project" value="UniProtKB-UniRule"/>
</dbReference>
<dbReference type="CDD" id="cd16331">
    <property type="entry name" value="YjgA-like"/>
    <property type="match status" value="1"/>
</dbReference>
<dbReference type="FunFam" id="1.10.60.30:FF:000001">
    <property type="entry name" value="UPF0307 protein YjgA"/>
    <property type="match status" value="1"/>
</dbReference>
<dbReference type="FunFam" id="1.10.60.30:FF:000002">
    <property type="entry name" value="UPF0307 protein YjgA"/>
    <property type="match status" value="1"/>
</dbReference>
<dbReference type="Gene3D" id="1.10.60.30">
    <property type="entry name" value="PSPTO4464-like domains"/>
    <property type="match status" value="2"/>
</dbReference>
<dbReference type="HAMAP" id="MF_00765">
    <property type="entry name" value="DarP"/>
    <property type="match status" value="1"/>
</dbReference>
<dbReference type="InterPro" id="IPR006839">
    <property type="entry name" value="DarP"/>
</dbReference>
<dbReference type="InterPro" id="IPR023153">
    <property type="entry name" value="DarP_sf"/>
</dbReference>
<dbReference type="NCBIfam" id="NF003593">
    <property type="entry name" value="PRK05255.1-1"/>
    <property type="match status" value="1"/>
</dbReference>
<dbReference type="PANTHER" id="PTHR38101">
    <property type="entry name" value="UPF0307 PROTEIN YJGA"/>
    <property type="match status" value="1"/>
</dbReference>
<dbReference type="PANTHER" id="PTHR38101:SF1">
    <property type="entry name" value="UPF0307 PROTEIN YJGA"/>
    <property type="match status" value="1"/>
</dbReference>
<dbReference type="Pfam" id="PF04751">
    <property type="entry name" value="DarP"/>
    <property type="match status" value="1"/>
</dbReference>
<dbReference type="PIRSF" id="PIRSF016183">
    <property type="entry name" value="UCP016183"/>
    <property type="match status" value="1"/>
</dbReference>
<dbReference type="SUPFAM" id="SSF158710">
    <property type="entry name" value="PSPTO4464-like"/>
    <property type="match status" value="1"/>
</dbReference>
<feature type="chain" id="PRO_1000198388" description="Dual-action ribosomal maturation protein DarP">
    <location>
        <begin position="1"/>
        <end position="183"/>
    </location>
</feature>
<reference key="1">
    <citation type="journal article" date="2008" name="PLoS Genet.">
        <title>Complete genome sequence of the N2-fixing broad host range endophyte Klebsiella pneumoniae 342 and virulence predictions verified in mice.</title>
        <authorList>
            <person name="Fouts D.E."/>
            <person name="Tyler H.L."/>
            <person name="DeBoy R.T."/>
            <person name="Daugherty S."/>
            <person name="Ren Q."/>
            <person name="Badger J.H."/>
            <person name="Durkin A.S."/>
            <person name="Huot H."/>
            <person name="Shrivastava S."/>
            <person name="Kothari S."/>
            <person name="Dodson R.J."/>
            <person name="Mohamoud Y."/>
            <person name="Khouri H."/>
            <person name="Roesch L.F.W."/>
            <person name="Krogfelt K.A."/>
            <person name="Struve C."/>
            <person name="Triplett E.W."/>
            <person name="Methe B.A."/>
        </authorList>
    </citation>
    <scope>NUCLEOTIDE SEQUENCE [LARGE SCALE GENOMIC DNA]</scope>
    <source>
        <strain>342</strain>
    </source>
</reference>